<name>GP151_HUMAN</name>
<sequence length="419" mass="46637">MLAAAFADSNSSSMNVSFAHLHFAGGYLPSDSQDWRTIIPALLVAVCLVGFVGNLCVIGILLHNAWKGKPSMIHSLILNLSLADLSLLLFSAPIRATAYSKSVWDLGWFVCKSSDWFIHTCMAAKSLTIVVVAKVCFMYASDPAKQVSIHNYTIWSVLVAIWTVASLLPLPEWFFSTIRHHEGVEMCLVDVPAVAEEFMSMFGKLYPLLAFGLPLFFASFYFWRAYDQCKKRGTKTQNLRNQIRSKQVTVMLLSIAIISALLWLPEWVAWLWVWHLKAAGPAPPQGFIALSQVLMFSISSANPLIFLVMSEEFREGLKGVWKWMITKKPPTVSESQETPAGNSEGLPDKVPSPESPASIPEKEKPSSPSSGKGKTEKAEIPILPDVEQFWHERDTVPSVQDNDPIPWEHEDQETGEGVK</sequence>
<feature type="chain" id="PRO_0000069632" description="G-protein coupled receptor 151">
    <location>
        <begin position="1"/>
        <end position="419"/>
    </location>
</feature>
<feature type="topological domain" description="Extracellular" evidence="1">
    <location>
        <begin position="1"/>
        <end position="41"/>
    </location>
</feature>
<feature type="transmembrane region" description="Helical; Name=1" evidence="1">
    <location>
        <begin position="42"/>
        <end position="62"/>
    </location>
</feature>
<feature type="topological domain" description="Cytoplasmic" evidence="1">
    <location>
        <begin position="63"/>
        <end position="71"/>
    </location>
</feature>
<feature type="transmembrane region" description="Helical; Name=2" evidence="1">
    <location>
        <begin position="72"/>
        <end position="92"/>
    </location>
</feature>
<feature type="topological domain" description="Extracellular" evidence="1">
    <location>
        <begin position="93"/>
        <end position="116"/>
    </location>
</feature>
<feature type="transmembrane region" description="Helical; Name=3" evidence="1">
    <location>
        <begin position="117"/>
        <end position="137"/>
    </location>
</feature>
<feature type="topological domain" description="Cytoplasmic" evidence="1">
    <location>
        <begin position="138"/>
        <end position="153"/>
    </location>
</feature>
<feature type="transmembrane region" description="Helical; Name=4" evidence="1">
    <location>
        <begin position="154"/>
        <end position="174"/>
    </location>
</feature>
<feature type="topological domain" description="Extracellular" evidence="1">
    <location>
        <begin position="175"/>
        <end position="201"/>
    </location>
</feature>
<feature type="transmembrane region" description="Helical; Name=5" evidence="1">
    <location>
        <begin position="202"/>
        <end position="222"/>
    </location>
</feature>
<feature type="topological domain" description="Cytoplasmic" evidence="1">
    <location>
        <begin position="223"/>
        <end position="252"/>
    </location>
</feature>
<feature type="transmembrane region" description="Helical; Name=6" evidence="1">
    <location>
        <begin position="253"/>
        <end position="273"/>
    </location>
</feature>
<feature type="topological domain" description="Extracellular" evidence="1">
    <location>
        <begin position="274"/>
        <end position="286"/>
    </location>
</feature>
<feature type="transmembrane region" description="Helical; Name=7" evidence="1">
    <location>
        <begin position="287"/>
        <end position="307"/>
    </location>
</feature>
<feature type="topological domain" description="Cytoplasmic" evidence="1">
    <location>
        <begin position="308"/>
        <end position="419"/>
    </location>
</feature>
<feature type="region of interest" description="Disordered" evidence="3">
    <location>
        <begin position="330"/>
        <end position="419"/>
    </location>
</feature>
<feature type="compositionally biased region" description="Polar residues" evidence="3">
    <location>
        <begin position="332"/>
        <end position="341"/>
    </location>
</feature>
<feature type="compositionally biased region" description="Acidic residues" evidence="3">
    <location>
        <begin position="410"/>
        <end position="419"/>
    </location>
</feature>
<feature type="glycosylation site" description="N-linked (GlcNAc...) asparagine" evidence="1">
    <location>
        <position position="10"/>
    </location>
</feature>
<feature type="glycosylation site" description="N-linked (GlcNAc...) asparagine" evidence="1">
    <location>
        <position position="15"/>
    </location>
</feature>
<feature type="disulfide bond" evidence="2">
    <location>
        <begin position="111"/>
        <end position="187"/>
    </location>
</feature>
<feature type="sequence variant" id="VAR_049404" description="In dbSNP:rs17104742.">
    <original>P</original>
    <variation>L</variation>
    <location>
        <position position="40"/>
    </location>
</feature>
<feature type="sequence variant" id="VAR_049405" description="In dbSNP:rs7713676.">
    <original>A</original>
    <variation>V</variation>
    <location>
        <position position="144"/>
    </location>
</feature>
<feature type="sequence variant" id="VAR_049406" description="In dbSNP:rs7709485.">
    <original>L</original>
    <variation>V</variation>
    <location>
        <position position="261"/>
    </location>
</feature>
<organism>
    <name type="scientific">Homo sapiens</name>
    <name type="common">Human</name>
    <dbReference type="NCBI Taxonomy" id="9606"/>
    <lineage>
        <taxon>Eukaryota</taxon>
        <taxon>Metazoa</taxon>
        <taxon>Chordata</taxon>
        <taxon>Craniata</taxon>
        <taxon>Vertebrata</taxon>
        <taxon>Euteleostomi</taxon>
        <taxon>Mammalia</taxon>
        <taxon>Eutheria</taxon>
        <taxon>Euarchontoglires</taxon>
        <taxon>Primates</taxon>
        <taxon>Haplorrhini</taxon>
        <taxon>Catarrhini</taxon>
        <taxon>Hominidae</taxon>
        <taxon>Homo</taxon>
    </lineage>
</organism>
<accession>Q8TDV0</accession>
<accession>Q86SN8</accession>
<accession>Q8NGV2</accession>
<evidence type="ECO:0000255" key="1"/>
<evidence type="ECO:0000255" key="2">
    <source>
        <dbReference type="PROSITE-ProRule" id="PRU00521"/>
    </source>
</evidence>
<evidence type="ECO:0000256" key="3">
    <source>
        <dbReference type="SAM" id="MobiDB-lite"/>
    </source>
</evidence>
<evidence type="ECO:0000269" key="4">
    <source>
    </source>
</evidence>
<evidence type="ECO:0000269" key="5">
    <source>
    </source>
</evidence>
<evidence type="ECO:0000303" key="6">
    <source>
    </source>
</evidence>
<evidence type="ECO:0000305" key="7"/>
<evidence type="ECO:0000305" key="8">
    <source>
    </source>
</evidence>
<evidence type="ECO:0000312" key="9">
    <source>
        <dbReference type="HGNC" id="HGNC:23624"/>
    </source>
</evidence>
<reference key="1">
    <citation type="journal article" date="2004" name="Neuropharmacology">
        <title>Cloning and characterization of a novel G-protein-coupled receptor with homology to galanin receptors.</title>
        <authorList>
            <person name="Ignatov A."/>
            <person name="Hermans-Borgmeyer I."/>
            <person name="Schaller H.C."/>
        </authorList>
    </citation>
    <scope>NUCLEOTIDE SEQUENCE [MRNA]</scope>
    <scope>TISSUE SPECIFICITY</scope>
</reference>
<reference key="2">
    <citation type="journal article" date="2002" name="FEBS Lett.">
        <title>Identification of G protein-coupled receptor genes from the human genome sequence.</title>
        <authorList>
            <person name="Takeda S."/>
            <person name="Kadowaki S."/>
            <person name="Haga T."/>
            <person name="Takaesu H."/>
            <person name="Mitaku S."/>
        </authorList>
    </citation>
    <scope>NUCLEOTIDE SEQUENCE [LARGE SCALE GENOMIC DNA]</scope>
</reference>
<reference key="3">
    <citation type="submission" date="2001-07" db="EMBL/GenBank/DDBJ databases">
        <title>Genome-wide discovery and analysis of human seven transmembrane helix receptor genes.</title>
        <authorList>
            <person name="Suwa M."/>
            <person name="Sato T."/>
            <person name="Okouchi I."/>
            <person name="Arita M."/>
            <person name="Futami K."/>
            <person name="Matsumoto S."/>
            <person name="Tsutsumi S."/>
            <person name="Aburatani H."/>
            <person name="Asai K."/>
            <person name="Akiyama Y."/>
        </authorList>
    </citation>
    <scope>NUCLEOTIDE SEQUENCE [GENOMIC DNA]</scope>
</reference>
<reference key="4">
    <citation type="journal article" date="2003" name="Proc. Natl. Acad. Sci. U.S.A.">
        <title>The G protein-coupled receptor repertoires of human and mouse.</title>
        <authorList>
            <person name="Vassilatis D.K."/>
            <person name="Hohmann J.G."/>
            <person name="Zeng H."/>
            <person name="Li F."/>
            <person name="Ranchalis J.E."/>
            <person name="Mortrud M.T."/>
            <person name="Brown A."/>
            <person name="Rodriguez S.S."/>
            <person name="Weller J.R."/>
            <person name="Wright A.C."/>
            <person name="Bergmann J.E."/>
            <person name="Gaitanaris G.A."/>
        </authorList>
    </citation>
    <scope>NUCLEOTIDE SEQUENCE [LARGE SCALE MRNA] OF 130-274</scope>
</reference>
<reference key="5">
    <citation type="journal article" date="2019" name="J. Biochem.">
        <title>GPR31 and GPR151 are activated under acidic conditions.</title>
        <authorList>
            <person name="Mashiko M."/>
            <person name="Kurosawa A."/>
            <person name="Tani Y."/>
            <person name="Tsuji T."/>
            <person name="Takeda S."/>
        </authorList>
    </citation>
    <scope>FUNCTION</scope>
    <scope>SUBCELLULAR LOCATION</scope>
</reference>
<proteinExistence type="evidence at protein level"/>
<protein>
    <recommendedName>
        <fullName>G-protein coupled receptor 151</fullName>
    </recommendedName>
    <alternativeName>
        <fullName>G-protein coupled receptor PGR7</fullName>
    </alternativeName>
    <alternativeName>
        <fullName>GPCR-2037</fullName>
    </alternativeName>
    <alternativeName>
        <fullName evidence="9">Galanin receptor 4</fullName>
    </alternativeName>
    <alternativeName>
        <fullName evidence="6">Galanin-receptor-like protein</fullName>
        <shortName>GalRL</shortName>
    </alternativeName>
</protein>
<gene>
    <name type="primary">GPR151</name>
    <name type="synonym">GALR4</name>
    <name evidence="6" type="synonym">GALRL</name>
    <name type="synonym">PGR7</name>
</gene>
<dbReference type="EMBL" id="AY351676">
    <property type="protein sequence ID" value="AAQ62567.1"/>
    <property type="molecule type" value="mRNA"/>
</dbReference>
<dbReference type="EMBL" id="AB083592">
    <property type="protein sequence ID" value="BAB89305.1"/>
    <property type="molecule type" value="Genomic_DNA"/>
</dbReference>
<dbReference type="EMBL" id="AB065674">
    <property type="protein sequence ID" value="BAC05899.1"/>
    <property type="status" value="ALT_INIT"/>
    <property type="molecule type" value="Genomic_DNA"/>
</dbReference>
<dbReference type="EMBL" id="AY255557">
    <property type="protein sequence ID" value="AAO85069.1"/>
    <property type="molecule type" value="mRNA"/>
</dbReference>
<dbReference type="CCDS" id="CCDS34266.1"/>
<dbReference type="RefSeq" id="NP_919227.2">
    <property type="nucleotide sequence ID" value="NM_194251.3"/>
</dbReference>
<dbReference type="SMR" id="Q8TDV0"/>
<dbReference type="BioGRID" id="126397">
    <property type="interactions" value="53"/>
</dbReference>
<dbReference type="FunCoup" id="Q8TDV0">
    <property type="interactions" value="279"/>
</dbReference>
<dbReference type="IntAct" id="Q8TDV0">
    <property type="interactions" value="49"/>
</dbReference>
<dbReference type="STRING" id="9606.ENSP00000308733"/>
<dbReference type="ChEMBL" id="CHEMBL3085617"/>
<dbReference type="GlyCosmos" id="Q8TDV0">
    <property type="glycosylation" value="2 sites, No reported glycans"/>
</dbReference>
<dbReference type="GlyGen" id="Q8TDV0">
    <property type="glycosylation" value="2 sites"/>
</dbReference>
<dbReference type="iPTMnet" id="Q8TDV0"/>
<dbReference type="PhosphoSitePlus" id="Q8TDV0"/>
<dbReference type="BioMuta" id="GPR151"/>
<dbReference type="DMDM" id="48428097"/>
<dbReference type="MassIVE" id="Q8TDV0"/>
<dbReference type="PaxDb" id="9606-ENSP00000308733"/>
<dbReference type="PeptideAtlas" id="Q8TDV0"/>
<dbReference type="Antibodypedia" id="15831">
    <property type="antibodies" value="316 antibodies from 28 providers"/>
</dbReference>
<dbReference type="DNASU" id="134391"/>
<dbReference type="Ensembl" id="ENST00000311104.3">
    <property type="protein sequence ID" value="ENSP00000308733.2"/>
    <property type="gene ID" value="ENSG00000173250.3"/>
</dbReference>
<dbReference type="GeneID" id="134391"/>
<dbReference type="KEGG" id="hsa:134391"/>
<dbReference type="MANE-Select" id="ENST00000311104.3">
    <property type="protein sequence ID" value="ENSP00000308733.2"/>
    <property type="RefSeq nucleotide sequence ID" value="NM_194251.3"/>
    <property type="RefSeq protein sequence ID" value="NP_919227.2"/>
</dbReference>
<dbReference type="UCSC" id="uc003lod.2">
    <property type="organism name" value="human"/>
</dbReference>
<dbReference type="AGR" id="HGNC:23624"/>
<dbReference type="CTD" id="134391"/>
<dbReference type="DisGeNET" id="134391"/>
<dbReference type="GeneCards" id="GPR151"/>
<dbReference type="HGNC" id="HGNC:23624">
    <property type="gene designation" value="GPR151"/>
</dbReference>
<dbReference type="HPA" id="ENSG00000173250">
    <property type="expression patterns" value="Not detected"/>
</dbReference>
<dbReference type="MIM" id="618487">
    <property type="type" value="gene"/>
</dbReference>
<dbReference type="neXtProt" id="NX_Q8TDV0"/>
<dbReference type="PharmGKB" id="PA134975199"/>
<dbReference type="VEuPathDB" id="HostDB:ENSG00000173250"/>
<dbReference type="eggNOG" id="KOG3656">
    <property type="taxonomic scope" value="Eukaryota"/>
</dbReference>
<dbReference type="GeneTree" id="ENSGT01030000234518"/>
<dbReference type="HOGENOM" id="CLU_053982_0_0_1"/>
<dbReference type="InParanoid" id="Q8TDV0"/>
<dbReference type="OMA" id="CTIWSVL"/>
<dbReference type="OrthoDB" id="9009799at2759"/>
<dbReference type="PAN-GO" id="Q8TDV0">
    <property type="GO annotations" value="3 GO annotations based on evolutionary models"/>
</dbReference>
<dbReference type="PhylomeDB" id="Q8TDV0"/>
<dbReference type="TreeFam" id="TF332591"/>
<dbReference type="PathwayCommons" id="Q8TDV0"/>
<dbReference type="SignaLink" id="Q8TDV0"/>
<dbReference type="BioGRID-ORCS" id="134391">
    <property type="hits" value="15 hits in 1136 CRISPR screens"/>
</dbReference>
<dbReference type="GeneWiki" id="GPR151"/>
<dbReference type="GenomeRNAi" id="134391"/>
<dbReference type="Pharos" id="Q8TDV0">
    <property type="development level" value="Tbio"/>
</dbReference>
<dbReference type="PRO" id="PR:Q8TDV0"/>
<dbReference type="Proteomes" id="UP000005640">
    <property type="component" value="Chromosome 5"/>
</dbReference>
<dbReference type="RNAct" id="Q8TDV0">
    <property type="molecule type" value="protein"/>
</dbReference>
<dbReference type="Bgee" id="ENSG00000173250">
    <property type="expression patterns" value="Expressed in prefrontal cortex and 9 other cell types or tissues"/>
</dbReference>
<dbReference type="GO" id="GO:0098981">
    <property type="term" value="C:cholinergic synapse"/>
    <property type="evidence" value="ECO:0007669"/>
    <property type="project" value="Ensembl"/>
</dbReference>
<dbReference type="GO" id="GO:0005886">
    <property type="term" value="C:plasma membrane"/>
    <property type="evidence" value="ECO:0000318"/>
    <property type="project" value="GO_Central"/>
</dbReference>
<dbReference type="GO" id="GO:0042734">
    <property type="term" value="C:presynaptic membrane"/>
    <property type="evidence" value="ECO:0007669"/>
    <property type="project" value="Ensembl"/>
</dbReference>
<dbReference type="GO" id="GO:0030672">
    <property type="term" value="C:synaptic vesicle membrane"/>
    <property type="evidence" value="ECO:0007669"/>
    <property type="project" value="Ensembl"/>
</dbReference>
<dbReference type="GO" id="GO:0004930">
    <property type="term" value="F:G protein-coupled receptor activity"/>
    <property type="evidence" value="ECO:0000315"/>
    <property type="project" value="UniProtKB"/>
</dbReference>
<dbReference type="GO" id="GO:0042802">
    <property type="term" value="F:identical protein binding"/>
    <property type="evidence" value="ECO:0000353"/>
    <property type="project" value="IntAct"/>
</dbReference>
<dbReference type="GO" id="GO:0007186">
    <property type="term" value="P:G protein-coupled receptor signaling pathway"/>
    <property type="evidence" value="ECO:0000315"/>
    <property type="project" value="UniProtKB"/>
</dbReference>
<dbReference type="GO" id="GO:0050778">
    <property type="term" value="P:positive regulation of immune response"/>
    <property type="evidence" value="ECO:0000250"/>
    <property type="project" value="UniProtKB"/>
</dbReference>
<dbReference type="GO" id="GO:2000300">
    <property type="term" value="P:regulation of synaptic vesicle exocytosis"/>
    <property type="evidence" value="ECO:0007669"/>
    <property type="project" value="Ensembl"/>
</dbReference>
<dbReference type="GO" id="GO:0010447">
    <property type="term" value="P:response to acidic pH"/>
    <property type="evidence" value="ECO:0000315"/>
    <property type="project" value="UniProtKB"/>
</dbReference>
<dbReference type="GO" id="GO:0002931">
    <property type="term" value="P:response to ischemia"/>
    <property type="evidence" value="ECO:0000250"/>
    <property type="project" value="UniProtKB"/>
</dbReference>
<dbReference type="CDD" id="cd15002">
    <property type="entry name" value="7tmA_GPR151"/>
    <property type="match status" value="1"/>
</dbReference>
<dbReference type="FunFam" id="1.20.1070.10:FF:000215">
    <property type="entry name" value="G protein-coupled receptor 151"/>
    <property type="match status" value="1"/>
</dbReference>
<dbReference type="Gene3D" id="1.20.1070.10">
    <property type="entry name" value="Rhodopsin 7-helix transmembrane proteins"/>
    <property type="match status" value="1"/>
</dbReference>
<dbReference type="InterPro" id="IPR000276">
    <property type="entry name" value="GPCR_Rhodpsn"/>
</dbReference>
<dbReference type="InterPro" id="IPR017452">
    <property type="entry name" value="GPCR_Rhodpsn_7TM"/>
</dbReference>
<dbReference type="PANTHER" id="PTHR45695:SF1">
    <property type="entry name" value="G-PROTEIN COUPLED RECEPTOR 151"/>
    <property type="match status" value="1"/>
</dbReference>
<dbReference type="PANTHER" id="PTHR45695">
    <property type="entry name" value="LEUCOKININ RECEPTOR-RELATED"/>
    <property type="match status" value="1"/>
</dbReference>
<dbReference type="Pfam" id="PF00001">
    <property type="entry name" value="7tm_1"/>
    <property type="match status" value="1"/>
</dbReference>
<dbReference type="PRINTS" id="PR00237">
    <property type="entry name" value="GPCRRHODOPSN"/>
</dbReference>
<dbReference type="SUPFAM" id="SSF81321">
    <property type="entry name" value="Family A G protein-coupled receptor-like"/>
    <property type="match status" value="1"/>
</dbReference>
<dbReference type="PROSITE" id="PS50262">
    <property type="entry name" value="G_PROTEIN_RECEP_F1_2"/>
    <property type="match status" value="1"/>
</dbReference>
<keyword id="KW-1003">Cell membrane</keyword>
<keyword id="KW-1015">Disulfide bond</keyword>
<keyword id="KW-0297">G-protein coupled receptor</keyword>
<keyword id="KW-0325">Glycoprotein</keyword>
<keyword id="KW-0472">Membrane</keyword>
<keyword id="KW-0675">Receptor</keyword>
<keyword id="KW-1185">Reference proteome</keyword>
<keyword id="KW-0807">Transducer</keyword>
<keyword id="KW-0812">Transmembrane</keyword>
<keyword id="KW-1133">Transmembrane helix</keyword>
<comment type="function">
    <text evidence="5">Proton-sensing G-protein coupled receptor.</text>
</comment>
<comment type="interaction">
    <interactant intactId="EBI-11955647">
        <id>Q8TDV0</id>
    </interactant>
    <interactant intactId="EBI-715495">
        <id>P05090</id>
        <label>APOD</label>
    </interactant>
    <organismsDiffer>false</organismsDiffer>
    <experiments>3</experiments>
</comment>
<comment type="interaction">
    <interactant intactId="EBI-11955647">
        <id>Q8TDV0</id>
    </interactant>
    <interactant intactId="EBI-13059134">
        <id>Q13520</id>
        <label>AQP6</label>
    </interactant>
    <organismsDiffer>false</organismsDiffer>
    <experiments>3</experiments>
</comment>
<comment type="interaction">
    <interactant intactId="EBI-11955647">
        <id>Q8TDV0</id>
    </interactant>
    <interactant intactId="EBI-714543">
        <id>Q15041</id>
        <label>ARL6IP1</label>
    </interactant>
    <organismsDiffer>false</organismsDiffer>
    <experiments>3</experiments>
</comment>
<comment type="interaction">
    <interactant intactId="EBI-11955647">
        <id>Q8TDV0</id>
    </interactant>
    <interactant intactId="EBI-707714">
        <id>Q92843</id>
        <label>BCL2L2</label>
    </interactant>
    <organismsDiffer>false</organismsDiffer>
    <experiments>3</experiments>
</comment>
<comment type="interaction">
    <interactant intactId="EBI-11955647">
        <id>Q8TDV0</id>
    </interactant>
    <interactant intactId="EBI-3915344">
        <id>Q08708</id>
        <label>CD300C</label>
    </interactant>
    <organismsDiffer>false</organismsDiffer>
    <experiments>3</experiments>
</comment>
<comment type="interaction">
    <interactant intactId="EBI-11955647">
        <id>Q8TDV0</id>
    </interactant>
    <interactant intactId="EBI-358858">
        <id>O14735</id>
        <label>CDIPT</label>
    </interactant>
    <organismsDiffer>false</organismsDiffer>
    <experiments>3</experiments>
</comment>
<comment type="interaction">
    <interactant intactId="EBI-11955647">
        <id>Q8TDV0</id>
    </interactant>
    <interactant intactId="EBI-2622997">
        <id>Q9HA82</id>
        <label>CERS4</label>
    </interactant>
    <organismsDiffer>false</organismsDiffer>
    <experiments>3</experiments>
</comment>
<comment type="interaction">
    <interactant intactId="EBI-11955647">
        <id>Q8TDV0</id>
    </interactant>
    <interactant intactId="EBI-2130213">
        <id>Q99675</id>
        <label>CGRRF1</label>
    </interactant>
    <organismsDiffer>false</organismsDiffer>
    <experiments>3</experiments>
</comment>
<comment type="interaction">
    <interactant intactId="EBI-11955647">
        <id>Q8TDV0</id>
    </interactant>
    <interactant intactId="EBI-6942903">
        <id>Q96BA8</id>
        <label>CREB3L1</label>
    </interactant>
    <organismsDiffer>false</organismsDiffer>
    <experiments>3</experiments>
</comment>
<comment type="interaction">
    <interactant intactId="EBI-11955647">
        <id>Q8TDV0</id>
    </interactant>
    <interactant intactId="EBI-2680384">
        <id>Q9BQA9</id>
        <label>CYBC1</label>
    </interactant>
    <organismsDiffer>false</organismsDiffer>
    <experiments>3</experiments>
</comment>
<comment type="interaction">
    <interactant intactId="EBI-11955647">
        <id>Q8TDV0</id>
    </interactant>
    <interactant intactId="EBI-1753674">
        <id>P52803</id>
        <label>EFNA5</label>
    </interactant>
    <organismsDiffer>false</organismsDiffer>
    <experiments>3</experiments>
</comment>
<comment type="interaction">
    <interactant intactId="EBI-11955647">
        <id>Q8TDV0</id>
    </interactant>
    <interactant intactId="EBI-781551">
        <id>Q9Y282</id>
        <label>ERGIC3</label>
    </interactant>
    <organismsDiffer>false</organismsDiffer>
    <experiments>3</experiments>
</comment>
<comment type="interaction">
    <interactant intactId="EBI-11955647">
        <id>Q8TDV0</id>
    </interactant>
    <interactant intactId="EBI-18304435">
        <id>Q5JX71</id>
        <label>FAM209A</label>
    </interactant>
    <organismsDiffer>false</organismsDiffer>
    <experiments>3</experiments>
</comment>
<comment type="interaction">
    <interactant intactId="EBI-11955647">
        <id>Q8TDV0</id>
    </interactant>
    <interactant intactId="EBI-17458373">
        <id>P48165</id>
        <label>GJA8</label>
    </interactant>
    <organismsDiffer>false</organismsDiffer>
    <experiments>3</experiments>
</comment>
<comment type="interaction">
    <interactant intactId="EBI-11955647">
        <id>Q8TDV0</id>
    </interactant>
    <interactant intactId="EBI-11955647">
        <id>Q8TDV0</id>
        <label>GPR151</label>
    </interactant>
    <organismsDiffer>false</organismsDiffer>
    <experiments>3</experiments>
</comment>
<comment type="interaction">
    <interactant intactId="EBI-11955647">
        <id>Q8TDV0</id>
    </interactant>
    <interactant intactId="EBI-13345167">
        <id>Q8TDT2</id>
        <label>GPR152</label>
    </interactant>
    <organismsDiffer>false</organismsDiffer>
    <experiments>3</experiments>
</comment>
<comment type="interaction">
    <interactant intactId="EBI-11955647">
        <id>Q8TDV0</id>
    </interactant>
    <interactant intactId="EBI-11721746">
        <id>Q8TED1</id>
        <label>GPX8</label>
    </interactant>
    <organismsDiffer>false</organismsDiffer>
    <experiments>3</experiments>
</comment>
<comment type="interaction">
    <interactant intactId="EBI-11955647">
        <id>Q8TDV0</id>
    </interactant>
    <interactant intactId="EBI-720480">
        <id>P24593</id>
        <label>IGFBP5</label>
    </interactant>
    <organismsDiffer>false</organismsDiffer>
    <experiments>3</experiments>
</comment>
<comment type="interaction">
    <interactant intactId="EBI-11955647">
        <id>Q8TDV0</id>
    </interactant>
    <interactant intactId="EBI-751001">
        <id>Q14145</id>
        <label>KEAP1</label>
    </interactant>
    <organismsDiffer>false</organismsDiffer>
    <experiments>3</experiments>
</comment>
<comment type="interaction">
    <interactant intactId="EBI-11955647">
        <id>Q8TDV0</id>
    </interactant>
    <interactant intactId="EBI-8070286">
        <id>O43561-2</id>
        <label>LAT</label>
    </interactant>
    <organismsDiffer>false</organismsDiffer>
    <experiments>3</experiments>
</comment>
<comment type="interaction">
    <interactant intactId="EBI-11955647">
        <id>Q8TDV0</id>
    </interactant>
    <interactant intactId="EBI-3867271">
        <id>Q9NQG1</id>
        <label>MANBAL</label>
    </interactant>
    <organismsDiffer>false</organismsDiffer>
    <experiments>3</experiments>
</comment>
<comment type="interaction">
    <interactant intactId="EBI-11955647">
        <id>Q8TDV0</id>
    </interactant>
    <interactant intactId="EBI-10262547">
        <id>Q8IXM6</id>
        <label>NRM</label>
    </interactant>
    <organismsDiffer>false</organismsDiffer>
    <experiments>3</experiments>
</comment>
<comment type="interaction">
    <interactant intactId="EBI-11955647">
        <id>Q8TDV0</id>
    </interactant>
    <interactant intactId="EBI-1050125">
        <id>O15173</id>
        <label>PGRMC2</label>
    </interactant>
    <organismsDiffer>false</organismsDiffer>
    <experiments>3</experiments>
</comment>
<comment type="interaction">
    <interactant intactId="EBI-11955647">
        <id>Q8TDV0</id>
    </interactant>
    <interactant intactId="EBI-608347">
        <id>Q04941</id>
        <label>PLP2</label>
    </interactant>
    <organismsDiffer>false</organismsDiffer>
    <experiments>3</experiments>
</comment>
<comment type="interaction">
    <interactant intactId="EBI-11955647">
        <id>Q8TDV0</id>
    </interactant>
    <interactant intactId="EBI-3917235">
        <id>Q9NTJ5</id>
        <label>SACM1L</label>
    </interactant>
    <organismsDiffer>false</organismsDiffer>
    <experiments>3</experiments>
</comment>
<comment type="interaction">
    <interactant intactId="EBI-11955647">
        <id>Q8TDV0</id>
    </interactant>
    <interactant intactId="EBI-17247926">
        <id>Q9NY72</id>
        <label>SCN3B</label>
    </interactant>
    <organismsDiffer>false</organismsDiffer>
    <experiments>3</experiments>
</comment>
<comment type="interaction">
    <interactant intactId="EBI-11955647">
        <id>Q8TDV0</id>
    </interactant>
    <interactant intactId="EBI-18037857">
        <id>Q3SXP7</id>
        <label>SHISAL1</label>
    </interactant>
    <organismsDiffer>false</organismsDiffer>
    <experiments>3</experiments>
</comment>
<comment type="interaction">
    <interactant intactId="EBI-11955647">
        <id>Q8TDV0</id>
    </interactant>
    <interactant intactId="EBI-3923031">
        <id>Q14973</id>
        <label>SLC10A1</label>
    </interactant>
    <organismsDiffer>false</organismsDiffer>
    <experiments>3</experiments>
</comment>
<comment type="interaction">
    <interactant intactId="EBI-11955647">
        <id>Q8TDV0</id>
    </interactant>
    <interactant intactId="EBI-18159983">
        <id>Q3KNW5</id>
        <label>SLC10A6</label>
    </interactant>
    <organismsDiffer>false</organismsDiffer>
    <experiments>3</experiments>
</comment>
<comment type="interaction">
    <interactant intactId="EBI-11955647">
        <id>Q8TDV0</id>
    </interactant>
    <interactant intactId="EBI-17595455">
        <id>P54219-3</id>
        <label>SLC18A1</label>
    </interactant>
    <organismsDiffer>false</organismsDiffer>
    <experiments>3</experiments>
</comment>
<comment type="interaction">
    <interactant intactId="EBI-11955647">
        <id>Q8TDV0</id>
    </interactant>
    <interactant intactId="EBI-18036244">
        <id>Q05940</id>
        <label>SLC18A2</label>
    </interactant>
    <organismsDiffer>false</organismsDiffer>
    <experiments>3</experiments>
</comment>
<comment type="interaction">
    <interactant intactId="EBI-11955647">
        <id>Q8TDV0</id>
    </interactant>
    <interactant intactId="EBI-10290130">
        <id>Q96JW4</id>
        <label>SLC41A2</label>
    </interactant>
    <organismsDiffer>false</organismsDiffer>
    <experiments>3</experiments>
</comment>
<comment type="interaction">
    <interactant intactId="EBI-11955647">
        <id>Q8TDV0</id>
    </interactant>
    <interactant intactId="EBI-17280858">
        <id>Q8WWF3</id>
        <label>SSMEM1</label>
    </interactant>
    <organismsDiffer>false</organismsDiffer>
    <experiments>3</experiments>
</comment>
<comment type="interaction">
    <interactant intactId="EBI-11955647">
        <id>Q8TDV0</id>
    </interactant>
    <interactant intactId="EBI-727240">
        <id>Q9UNK0</id>
        <label>STX8</label>
    </interactant>
    <organismsDiffer>false</organismsDiffer>
    <experiments>3</experiments>
</comment>
<comment type="interaction">
    <interactant intactId="EBI-11955647">
        <id>Q8TDV0</id>
    </interactant>
    <interactant intactId="EBI-6268651">
        <id>Q9NPL8</id>
        <label>TIMMDC1</label>
    </interactant>
    <organismsDiffer>false</organismsDiffer>
    <experiments>3</experiments>
</comment>
<comment type="interaction">
    <interactant intactId="EBI-11955647">
        <id>Q8TDV0</id>
    </interactant>
    <interactant intactId="EBI-1045825">
        <id>P55061</id>
        <label>TMBIM6</label>
    </interactant>
    <organismsDiffer>false</organismsDiffer>
    <experiments>3</experiments>
</comment>
<comment type="interaction">
    <interactant intactId="EBI-11955647">
        <id>Q8TDV0</id>
    </interactant>
    <interactant intactId="EBI-11724423">
        <id>Q7Z7N9</id>
        <label>TMEM179B</label>
    </interactant>
    <organismsDiffer>false</organismsDiffer>
    <experiments>3</experiments>
</comment>
<comment type="interaction">
    <interactant intactId="EBI-11955647">
        <id>Q8TDV0</id>
    </interactant>
    <interactant intactId="EBI-11528917">
        <id>Q8WW34-2</id>
        <label>TMEM239</label>
    </interactant>
    <organismsDiffer>false</organismsDiffer>
    <experiments>3</experiments>
</comment>
<comment type="interaction">
    <interactant intactId="EBI-11955647">
        <id>Q8TDV0</id>
    </interactant>
    <interactant intactId="EBI-11988865">
        <id>A5PKU2</id>
        <label>TUSC5</label>
    </interactant>
    <organismsDiffer>false</organismsDiffer>
    <experiments>4</experiments>
</comment>
<comment type="interaction">
    <interactant intactId="EBI-11955647">
        <id>Q8TDV0</id>
    </interactant>
    <interactant intactId="EBI-13356252">
        <id>Q86WB7-2</id>
        <label>UNC93A</label>
    </interactant>
    <organismsDiffer>false</organismsDiffer>
    <experiments>3</experiments>
</comment>
<comment type="subcellular location">
    <subcellularLocation>
        <location evidence="8">Cell membrane</location>
        <topology evidence="1">Multi-pass membrane protein</topology>
    </subcellularLocation>
</comment>
<comment type="tissue specificity">
    <text evidence="4">High expression in the spinal cord.</text>
</comment>
<comment type="similarity">
    <text evidence="2">Belongs to the G-protein coupled receptor 1 family.</text>
</comment>
<comment type="sequence caution" evidence="7">
    <conflict type="erroneous initiation">
        <sequence resource="EMBL-CDS" id="BAC05899"/>
    </conflict>
</comment>